<reference key="1">
    <citation type="journal article" date="2011" name="J. Biotechnol.">
        <title>Genome sequence of B. amyloliquefaciens type strain DSM7(T) reveals differences to plant-associated B. amyloliquefaciens FZB42.</title>
        <authorList>
            <person name="Ruckert C."/>
            <person name="Blom J."/>
            <person name="Chen X."/>
            <person name="Reva O."/>
            <person name="Borriss R."/>
        </authorList>
    </citation>
    <scope>NUCLEOTIDE SEQUENCE [LARGE SCALE GENOMIC DNA]</scope>
    <source>
        <strain>ATCC 23350 / DSM 7 / BCRC 11601 / CCUG 28519 / NBRC 15535 / NRRL B-14393 / F</strain>
    </source>
</reference>
<dbReference type="EC" id="6.2.1.14" evidence="1"/>
<dbReference type="EMBL" id="FN597644">
    <property type="protein sequence ID" value="CBI43050.1"/>
    <property type="molecule type" value="Genomic_DNA"/>
</dbReference>
<dbReference type="RefSeq" id="WP_013352461.1">
    <property type="nucleotide sequence ID" value="NC_014551.1"/>
</dbReference>
<dbReference type="SMR" id="E1UV19"/>
<dbReference type="KEGG" id="bao:BAMF_1924"/>
<dbReference type="HOGENOM" id="CLU_076858_0_0_9"/>
<dbReference type="BioCyc" id="BAMY692420:BAMF_RS30275-MONOMER"/>
<dbReference type="BRENDA" id="6.2.1.14">
    <property type="organism ID" value="630"/>
</dbReference>
<dbReference type="UniPathway" id="UPA00999">
    <property type="reaction ID" value="UER00351"/>
</dbReference>
<dbReference type="Proteomes" id="UP000006562">
    <property type="component" value="Chromosome"/>
</dbReference>
<dbReference type="GO" id="GO:0042410">
    <property type="term" value="F:6-carboxyhexanoate-CoA ligase activity"/>
    <property type="evidence" value="ECO:0007669"/>
    <property type="project" value="UniProtKB-UniRule"/>
</dbReference>
<dbReference type="GO" id="GO:0005524">
    <property type="term" value="F:ATP binding"/>
    <property type="evidence" value="ECO:0007669"/>
    <property type="project" value="UniProtKB-KW"/>
</dbReference>
<dbReference type="GO" id="GO:0000287">
    <property type="term" value="F:magnesium ion binding"/>
    <property type="evidence" value="ECO:0007669"/>
    <property type="project" value="UniProtKB-UniRule"/>
</dbReference>
<dbReference type="GO" id="GO:0009102">
    <property type="term" value="P:biotin biosynthetic process"/>
    <property type="evidence" value="ECO:0007669"/>
    <property type="project" value="UniProtKB-UniRule"/>
</dbReference>
<dbReference type="HAMAP" id="MF_00668">
    <property type="entry name" value="BioW"/>
    <property type="match status" value="1"/>
</dbReference>
<dbReference type="InterPro" id="IPR005499">
    <property type="entry name" value="BioW"/>
</dbReference>
<dbReference type="NCBIfam" id="TIGR01204">
    <property type="entry name" value="bioW"/>
    <property type="match status" value="1"/>
</dbReference>
<dbReference type="NCBIfam" id="NF002360">
    <property type="entry name" value="PRK01322.1"/>
    <property type="match status" value="1"/>
</dbReference>
<dbReference type="Pfam" id="PF03744">
    <property type="entry name" value="BioW"/>
    <property type="match status" value="1"/>
</dbReference>
<gene>
    <name evidence="1" type="primary">bioW</name>
    <name type="ordered locus">BAMF_1924</name>
</gene>
<evidence type="ECO:0000255" key="1">
    <source>
        <dbReference type="HAMAP-Rule" id="MF_00668"/>
    </source>
</evidence>
<comment type="function">
    <text evidence="1">Catalyzes the transformation of pimelate into pimeloyl-CoA with concomitant hydrolysis of ATP to AMP.</text>
</comment>
<comment type="catalytic activity">
    <reaction evidence="1">
        <text>heptanedioate + ATP + CoA = 6-carboxyhexanoyl-CoA + AMP + diphosphate</text>
        <dbReference type="Rhea" id="RHEA:14781"/>
        <dbReference type="ChEBI" id="CHEBI:30616"/>
        <dbReference type="ChEBI" id="CHEBI:33019"/>
        <dbReference type="ChEBI" id="CHEBI:36165"/>
        <dbReference type="ChEBI" id="CHEBI:57287"/>
        <dbReference type="ChEBI" id="CHEBI:57360"/>
        <dbReference type="ChEBI" id="CHEBI:456215"/>
        <dbReference type="EC" id="6.2.1.14"/>
    </reaction>
</comment>
<comment type="cofactor">
    <cofactor evidence="1">
        <name>Mg(2+)</name>
        <dbReference type="ChEBI" id="CHEBI:18420"/>
    </cofactor>
</comment>
<comment type="pathway">
    <text evidence="1">Metabolic intermediate metabolism; pimeloyl-CoA biosynthesis; pimeloyl-CoA from pimelate: step 1/1.</text>
</comment>
<comment type="subunit">
    <text evidence="1">Homodimer.</text>
</comment>
<comment type="similarity">
    <text evidence="1">Belongs to the BioW family.</text>
</comment>
<accession>E1UV19</accession>
<organism>
    <name type="scientific">Bacillus amyloliquefaciens (strain ATCC 23350 / DSM 7 / BCRC 11601 / CCUG 28519 / NBRC 15535 / NRRL B-14393 / F)</name>
    <dbReference type="NCBI Taxonomy" id="692420"/>
    <lineage>
        <taxon>Bacteria</taxon>
        <taxon>Bacillati</taxon>
        <taxon>Bacillota</taxon>
        <taxon>Bacilli</taxon>
        <taxon>Bacillales</taxon>
        <taxon>Bacillaceae</taxon>
        <taxon>Bacillus</taxon>
        <taxon>Bacillus amyloliquefaciens group</taxon>
    </lineage>
</organism>
<sequence length="256" mass="28861">MEEEIYYSVRMRASRDAPHEQGGKHISGGERLITYSGLQEAVNGLLHKGFSHSRGTPDFMQIQLESINQPIKTIRPLPVAVHQTDTAEKGQAVARKLLQKAGIPPHMIEKAYQNIAEYAEVRGAVLFDIQTGKRIDGRKERGVRVSRMDWPAHDFQKWTLEHKMPENPRIKEAHAIAAKVCAHPGIIAELCWSDDPDYITGYVAAKKLGYQRITKMKNAGDESGCRIFFTDGAIDTESCIHFLEKQPVFIQREGKI</sequence>
<name>BIOW_BACAS</name>
<feature type="chain" id="PRO_0000412075" description="6-carboxyhexanoate--CoA ligase">
    <location>
        <begin position="1"/>
        <end position="256"/>
    </location>
</feature>
<proteinExistence type="inferred from homology"/>
<protein>
    <recommendedName>
        <fullName evidence="1">6-carboxyhexanoate--CoA ligase</fullName>
        <ecNumber evidence="1">6.2.1.14</ecNumber>
    </recommendedName>
    <alternativeName>
        <fullName evidence="1">Pimeloyl-CoA synthase</fullName>
    </alternativeName>
</protein>
<keyword id="KW-0067">ATP-binding</keyword>
<keyword id="KW-0093">Biotin biosynthesis</keyword>
<keyword id="KW-0436">Ligase</keyword>
<keyword id="KW-0460">Magnesium</keyword>
<keyword id="KW-0547">Nucleotide-binding</keyword>
<keyword id="KW-1185">Reference proteome</keyword>